<dbReference type="EMBL" id="CP000768">
    <property type="protein sequence ID" value="ABS43957.1"/>
    <property type="molecule type" value="Genomic_DNA"/>
</dbReference>
<dbReference type="SMR" id="A7H651"/>
<dbReference type="KEGG" id="cjd:JJD26997_2076"/>
<dbReference type="HOGENOM" id="CLU_083987_3_2_7"/>
<dbReference type="Proteomes" id="UP000002302">
    <property type="component" value="Chromosome"/>
</dbReference>
<dbReference type="GO" id="GO:0022625">
    <property type="term" value="C:cytosolic large ribosomal subunit"/>
    <property type="evidence" value="ECO:0007669"/>
    <property type="project" value="TreeGrafter"/>
</dbReference>
<dbReference type="GO" id="GO:0019843">
    <property type="term" value="F:rRNA binding"/>
    <property type="evidence" value="ECO:0007669"/>
    <property type="project" value="UniProtKB-UniRule"/>
</dbReference>
<dbReference type="GO" id="GO:0003735">
    <property type="term" value="F:structural constituent of ribosome"/>
    <property type="evidence" value="ECO:0007669"/>
    <property type="project" value="InterPro"/>
</dbReference>
<dbReference type="GO" id="GO:0006412">
    <property type="term" value="P:translation"/>
    <property type="evidence" value="ECO:0007669"/>
    <property type="project" value="UniProtKB-UniRule"/>
</dbReference>
<dbReference type="CDD" id="cd00336">
    <property type="entry name" value="Ribosomal_L22"/>
    <property type="match status" value="1"/>
</dbReference>
<dbReference type="Gene3D" id="3.90.470.10">
    <property type="entry name" value="Ribosomal protein L22/L17"/>
    <property type="match status" value="1"/>
</dbReference>
<dbReference type="HAMAP" id="MF_01331_B">
    <property type="entry name" value="Ribosomal_uL22_B"/>
    <property type="match status" value="1"/>
</dbReference>
<dbReference type="InterPro" id="IPR001063">
    <property type="entry name" value="Ribosomal_uL22"/>
</dbReference>
<dbReference type="InterPro" id="IPR005727">
    <property type="entry name" value="Ribosomal_uL22_bac/chlpt-type"/>
</dbReference>
<dbReference type="InterPro" id="IPR047867">
    <property type="entry name" value="Ribosomal_uL22_bac/org-type"/>
</dbReference>
<dbReference type="InterPro" id="IPR018260">
    <property type="entry name" value="Ribosomal_uL22_CS"/>
</dbReference>
<dbReference type="InterPro" id="IPR036394">
    <property type="entry name" value="Ribosomal_uL22_sf"/>
</dbReference>
<dbReference type="NCBIfam" id="TIGR01044">
    <property type="entry name" value="rplV_bact"/>
    <property type="match status" value="1"/>
</dbReference>
<dbReference type="PANTHER" id="PTHR13501">
    <property type="entry name" value="CHLOROPLAST 50S RIBOSOMAL PROTEIN L22-RELATED"/>
    <property type="match status" value="1"/>
</dbReference>
<dbReference type="PANTHER" id="PTHR13501:SF8">
    <property type="entry name" value="LARGE RIBOSOMAL SUBUNIT PROTEIN UL22M"/>
    <property type="match status" value="1"/>
</dbReference>
<dbReference type="Pfam" id="PF00237">
    <property type="entry name" value="Ribosomal_L22"/>
    <property type="match status" value="1"/>
</dbReference>
<dbReference type="SUPFAM" id="SSF54843">
    <property type="entry name" value="Ribosomal protein L22"/>
    <property type="match status" value="1"/>
</dbReference>
<dbReference type="PROSITE" id="PS00464">
    <property type="entry name" value="RIBOSOMAL_L22"/>
    <property type="match status" value="1"/>
</dbReference>
<name>RL22_CAMJD</name>
<sequence length="141" mass="15255">MSKALIKFIRLSPTKARLIAREVQGMNAELAMASLKFMPNKGAKYIANAISSAVANGGFEANEVIVKSCRVDVAAVLKRFRPRARGSASRIRKPTSHILVEVVKAEVKAEEKKTVAKKTTTTKAPAKKTTSTKKATAKKES</sequence>
<proteinExistence type="inferred from homology"/>
<feature type="chain" id="PRO_1000052555" description="Large ribosomal subunit protein uL22">
    <location>
        <begin position="1"/>
        <end position="141"/>
    </location>
</feature>
<feature type="region of interest" description="Disordered" evidence="2">
    <location>
        <begin position="110"/>
        <end position="141"/>
    </location>
</feature>
<feature type="compositionally biased region" description="Low complexity" evidence="2">
    <location>
        <begin position="117"/>
        <end position="134"/>
    </location>
</feature>
<organism>
    <name type="scientific">Campylobacter jejuni subsp. doylei (strain ATCC BAA-1458 / RM4099 / 269.97)</name>
    <dbReference type="NCBI Taxonomy" id="360109"/>
    <lineage>
        <taxon>Bacteria</taxon>
        <taxon>Pseudomonadati</taxon>
        <taxon>Campylobacterota</taxon>
        <taxon>Epsilonproteobacteria</taxon>
        <taxon>Campylobacterales</taxon>
        <taxon>Campylobacteraceae</taxon>
        <taxon>Campylobacter</taxon>
    </lineage>
</organism>
<keyword id="KW-0687">Ribonucleoprotein</keyword>
<keyword id="KW-0689">Ribosomal protein</keyword>
<keyword id="KW-0694">RNA-binding</keyword>
<keyword id="KW-0699">rRNA-binding</keyword>
<gene>
    <name evidence="1" type="primary">rplV</name>
    <name type="ordered locus">JJD26997_2076</name>
</gene>
<comment type="function">
    <text evidence="1">This protein binds specifically to 23S rRNA; its binding is stimulated by other ribosomal proteins, e.g. L4, L17, and L20. It is important during the early stages of 50S assembly. It makes multiple contacts with different domains of the 23S rRNA in the assembled 50S subunit and ribosome (By similarity).</text>
</comment>
<comment type="function">
    <text evidence="1">The globular domain of the protein is located near the polypeptide exit tunnel on the outside of the subunit, while an extended beta-hairpin is found that lines the wall of the exit tunnel in the center of the 70S ribosome.</text>
</comment>
<comment type="subunit">
    <text evidence="1">Part of the 50S ribosomal subunit.</text>
</comment>
<comment type="similarity">
    <text evidence="1">Belongs to the universal ribosomal protein uL22 family.</text>
</comment>
<protein>
    <recommendedName>
        <fullName evidence="1">Large ribosomal subunit protein uL22</fullName>
    </recommendedName>
    <alternativeName>
        <fullName evidence="3">50S ribosomal protein L22</fullName>
    </alternativeName>
</protein>
<accession>A7H651</accession>
<evidence type="ECO:0000255" key="1">
    <source>
        <dbReference type="HAMAP-Rule" id="MF_01331"/>
    </source>
</evidence>
<evidence type="ECO:0000256" key="2">
    <source>
        <dbReference type="SAM" id="MobiDB-lite"/>
    </source>
</evidence>
<evidence type="ECO:0000305" key="3"/>
<reference key="1">
    <citation type="submission" date="2007-07" db="EMBL/GenBank/DDBJ databases">
        <title>Complete genome sequence of Campylobacter jejuni subsp doylei 269.97 isolated from human blood.</title>
        <authorList>
            <person name="Fouts D.E."/>
            <person name="Mongodin E.F."/>
            <person name="Puiu D."/>
            <person name="Sebastian Y."/>
            <person name="Miller W.G."/>
            <person name="Mandrell R.E."/>
            <person name="Lastovica A.J."/>
            <person name="Nelson K.E."/>
        </authorList>
    </citation>
    <scope>NUCLEOTIDE SEQUENCE [LARGE SCALE GENOMIC DNA]</scope>
    <source>
        <strain>ATCC BAA-1458 / RM4099 / 269.97</strain>
    </source>
</reference>